<organism>
    <name type="scientific">Nitrosomonas europaea (strain ATCC 19718 / CIP 103999 / KCTC 2705 / NBRC 14298)</name>
    <dbReference type="NCBI Taxonomy" id="228410"/>
    <lineage>
        <taxon>Bacteria</taxon>
        <taxon>Pseudomonadati</taxon>
        <taxon>Pseudomonadota</taxon>
        <taxon>Betaproteobacteria</taxon>
        <taxon>Nitrosomonadales</taxon>
        <taxon>Nitrosomonadaceae</taxon>
        <taxon>Nitrosomonas</taxon>
    </lineage>
</organism>
<name>PYRG_NITEU</name>
<feature type="chain" id="PRO_0000138207" description="CTP synthase">
    <location>
        <begin position="1"/>
        <end position="564"/>
    </location>
</feature>
<feature type="domain" description="Glutamine amidotransferase type-1" evidence="1">
    <location>
        <begin position="290"/>
        <end position="543"/>
    </location>
</feature>
<feature type="region of interest" description="Amidoligase domain" evidence="1">
    <location>
        <begin position="1"/>
        <end position="265"/>
    </location>
</feature>
<feature type="active site" description="Nucleophile; for glutamine hydrolysis" evidence="1">
    <location>
        <position position="378"/>
    </location>
</feature>
<feature type="active site" evidence="1">
    <location>
        <position position="516"/>
    </location>
</feature>
<feature type="active site" evidence="1">
    <location>
        <position position="518"/>
    </location>
</feature>
<feature type="binding site" evidence="1">
    <location>
        <position position="13"/>
    </location>
    <ligand>
        <name>CTP</name>
        <dbReference type="ChEBI" id="CHEBI:37563"/>
        <note>allosteric inhibitor</note>
    </ligand>
</feature>
<feature type="binding site" evidence="1">
    <location>
        <position position="13"/>
    </location>
    <ligand>
        <name>UTP</name>
        <dbReference type="ChEBI" id="CHEBI:46398"/>
    </ligand>
</feature>
<feature type="binding site" evidence="1">
    <location>
        <begin position="14"/>
        <end position="19"/>
    </location>
    <ligand>
        <name>ATP</name>
        <dbReference type="ChEBI" id="CHEBI:30616"/>
    </ligand>
</feature>
<feature type="binding site" evidence="1">
    <location>
        <position position="71"/>
    </location>
    <ligand>
        <name>ATP</name>
        <dbReference type="ChEBI" id="CHEBI:30616"/>
    </ligand>
</feature>
<feature type="binding site" evidence="1">
    <location>
        <position position="71"/>
    </location>
    <ligand>
        <name>Mg(2+)</name>
        <dbReference type="ChEBI" id="CHEBI:18420"/>
    </ligand>
</feature>
<feature type="binding site" evidence="1">
    <location>
        <position position="139"/>
    </location>
    <ligand>
        <name>Mg(2+)</name>
        <dbReference type="ChEBI" id="CHEBI:18420"/>
    </ligand>
</feature>
<feature type="binding site" evidence="1">
    <location>
        <begin position="146"/>
        <end position="148"/>
    </location>
    <ligand>
        <name>CTP</name>
        <dbReference type="ChEBI" id="CHEBI:37563"/>
        <note>allosteric inhibitor</note>
    </ligand>
</feature>
<feature type="binding site" evidence="1">
    <location>
        <begin position="186"/>
        <end position="191"/>
    </location>
    <ligand>
        <name>CTP</name>
        <dbReference type="ChEBI" id="CHEBI:37563"/>
        <note>allosteric inhibitor</note>
    </ligand>
</feature>
<feature type="binding site" evidence="1">
    <location>
        <begin position="186"/>
        <end position="191"/>
    </location>
    <ligand>
        <name>UTP</name>
        <dbReference type="ChEBI" id="CHEBI:46398"/>
    </ligand>
</feature>
<feature type="binding site" evidence="1">
    <location>
        <position position="222"/>
    </location>
    <ligand>
        <name>CTP</name>
        <dbReference type="ChEBI" id="CHEBI:37563"/>
        <note>allosteric inhibitor</note>
    </ligand>
</feature>
<feature type="binding site" evidence="1">
    <location>
        <position position="222"/>
    </location>
    <ligand>
        <name>UTP</name>
        <dbReference type="ChEBI" id="CHEBI:46398"/>
    </ligand>
</feature>
<feature type="binding site" evidence="1">
    <location>
        <position position="351"/>
    </location>
    <ligand>
        <name>L-glutamine</name>
        <dbReference type="ChEBI" id="CHEBI:58359"/>
    </ligand>
</feature>
<feature type="binding site" evidence="1">
    <location>
        <begin position="379"/>
        <end position="382"/>
    </location>
    <ligand>
        <name>L-glutamine</name>
        <dbReference type="ChEBI" id="CHEBI:58359"/>
    </ligand>
</feature>
<feature type="binding site" evidence="1">
    <location>
        <position position="402"/>
    </location>
    <ligand>
        <name>L-glutamine</name>
        <dbReference type="ChEBI" id="CHEBI:58359"/>
    </ligand>
</feature>
<feature type="binding site" evidence="1">
    <location>
        <position position="469"/>
    </location>
    <ligand>
        <name>L-glutamine</name>
        <dbReference type="ChEBI" id="CHEBI:58359"/>
    </ligand>
</feature>
<feature type="sequence conflict" description="In Ref. 2; AAC33441." evidence="2" ref="2">
    <original>G</original>
    <variation>A</variation>
    <location>
        <position position="105"/>
    </location>
</feature>
<feature type="sequence conflict" description="In Ref. 2; AAC33441." evidence="2" ref="2">
    <original>E</original>
    <variation>D</variation>
    <location>
        <position position="464"/>
    </location>
</feature>
<reference key="1">
    <citation type="journal article" date="2003" name="J. Bacteriol.">
        <title>Complete genome sequence of the ammonia-oxidizing bacterium and obligate chemolithoautotroph Nitrosomonas europaea.</title>
        <authorList>
            <person name="Chain P."/>
            <person name="Lamerdin J.E."/>
            <person name="Larimer F.W."/>
            <person name="Regala W."/>
            <person name="Lao V."/>
            <person name="Land M.L."/>
            <person name="Hauser L."/>
            <person name="Hooper A.B."/>
            <person name="Klotz M.G."/>
            <person name="Norton J."/>
            <person name="Sayavedra-Soto L.A."/>
            <person name="Arciero D.M."/>
            <person name="Hommes N.G."/>
            <person name="Whittaker M.M."/>
            <person name="Arp D.J."/>
        </authorList>
    </citation>
    <scope>NUCLEOTIDE SEQUENCE [LARGE SCALE GENOMIC DNA]</scope>
    <source>
        <strain>ATCC 19718 / CIP 103999 / KCTC 2705 / NBRC 14298</strain>
    </source>
</reference>
<reference key="2">
    <citation type="journal article" date="1998" name="FEMS Microbiol. Lett.">
        <title>Linkage of genes encoding enolase (eno) and CTP synthase (pyrG) in the beta-subdivision proteobacterium Nitrosomonas europaea.</title>
        <authorList>
            <person name="Mahony T.J."/>
            <person name="Miller D.J."/>
        </authorList>
    </citation>
    <scope>NUCLEOTIDE SEQUENCE [GENOMIC DNA] OF 41-564</scope>
    <source>
        <strain>ATCC 19718 / CIP 103999 / KCTC 2705 / NBRC 14298</strain>
    </source>
</reference>
<sequence>MTKFVFVTGGVVSSLGKGIAAASLAALLETRGIRVTILKLDPYINVDPGTMNPFQHGEVFVTDDGAETDLDLGHYERFISTKMTRQNNFTTGQIYESVIRKERRGDYLGGTVQVIPHITDEIKLFIRNGVSDAQVAIVEIGGTVGDIESLPFLEAIRQMSVQLPHHDTCFIHLTLLPYISSAGELKTKPTQHSVKELREIGIQPDVLLCRSDRPLPLEERRKIALFTNVREESVISAIDVDNIYKIPALLHEQMLDEIVCHRLDILARPANLTVWKKLVHALEHPEHEVSIALVGKYVDLTESYKSLSEALIHAGIHTRCKINIHYIDSENIEQHGTGCLTNMDAILVPGGFGKRGVEGKIMAISYARNHRIPYLGICLGMQLAVIEFSRNRLQLENAHSTEFDPDTPYPVLGLITEWRDRCGRVEKRSAQTDLGGTMRLGGQECLLKPHTLAHKIYGADKVIERHRHRYEVNAEFIPQLEQAGMHISGLSAEGDLCEMIELPQSEHPWFVACQFHPEFTSTPRNGHPLFKSYIQAAISFAGQSDRTKLHSRNVQESVTTDSSN</sequence>
<gene>
    <name evidence="1" type="primary">pyrG</name>
    <name type="ordered locus">NE1045</name>
</gene>
<protein>
    <recommendedName>
        <fullName evidence="1">CTP synthase</fullName>
        <ecNumber evidence="1">6.3.4.2</ecNumber>
    </recommendedName>
    <alternativeName>
        <fullName evidence="1">Cytidine 5'-triphosphate synthase</fullName>
    </alternativeName>
    <alternativeName>
        <fullName evidence="1">Cytidine triphosphate synthetase</fullName>
        <shortName evidence="1">CTP synthetase</shortName>
        <shortName evidence="1">CTPS</shortName>
    </alternativeName>
    <alternativeName>
        <fullName evidence="1">UTP--ammonia ligase</fullName>
    </alternativeName>
</protein>
<comment type="function">
    <text evidence="1">Catalyzes the ATP-dependent amination of UTP to CTP with either L-glutamine or ammonia as the source of nitrogen. Regulates intracellular CTP levels through interactions with the four ribonucleotide triphosphates.</text>
</comment>
<comment type="catalytic activity">
    <reaction evidence="1">
        <text>UTP + L-glutamine + ATP + H2O = CTP + L-glutamate + ADP + phosphate + 2 H(+)</text>
        <dbReference type="Rhea" id="RHEA:26426"/>
        <dbReference type="ChEBI" id="CHEBI:15377"/>
        <dbReference type="ChEBI" id="CHEBI:15378"/>
        <dbReference type="ChEBI" id="CHEBI:29985"/>
        <dbReference type="ChEBI" id="CHEBI:30616"/>
        <dbReference type="ChEBI" id="CHEBI:37563"/>
        <dbReference type="ChEBI" id="CHEBI:43474"/>
        <dbReference type="ChEBI" id="CHEBI:46398"/>
        <dbReference type="ChEBI" id="CHEBI:58359"/>
        <dbReference type="ChEBI" id="CHEBI:456216"/>
        <dbReference type="EC" id="6.3.4.2"/>
    </reaction>
</comment>
<comment type="catalytic activity">
    <reaction evidence="1">
        <text>L-glutamine + H2O = L-glutamate + NH4(+)</text>
        <dbReference type="Rhea" id="RHEA:15889"/>
        <dbReference type="ChEBI" id="CHEBI:15377"/>
        <dbReference type="ChEBI" id="CHEBI:28938"/>
        <dbReference type="ChEBI" id="CHEBI:29985"/>
        <dbReference type="ChEBI" id="CHEBI:58359"/>
    </reaction>
</comment>
<comment type="catalytic activity">
    <reaction evidence="1">
        <text>UTP + NH4(+) + ATP = CTP + ADP + phosphate + 2 H(+)</text>
        <dbReference type="Rhea" id="RHEA:16597"/>
        <dbReference type="ChEBI" id="CHEBI:15378"/>
        <dbReference type="ChEBI" id="CHEBI:28938"/>
        <dbReference type="ChEBI" id="CHEBI:30616"/>
        <dbReference type="ChEBI" id="CHEBI:37563"/>
        <dbReference type="ChEBI" id="CHEBI:43474"/>
        <dbReference type="ChEBI" id="CHEBI:46398"/>
        <dbReference type="ChEBI" id="CHEBI:456216"/>
    </reaction>
</comment>
<comment type="activity regulation">
    <text evidence="1">Allosterically activated by GTP, when glutamine is the substrate; GTP has no effect on the reaction when ammonia is the substrate. The allosteric effector GTP functions by stabilizing the protein conformation that binds the tetrahedral intermediate(s) formed during glutamine hydrolysis. Inhibited by the product CTP, via allosteric rather than competitive inhibition.</text>
</comment>
<comment type="pathway">
    <text evidence="1">Pyrimidine metabolism; CTP biosynthesis via de novo pathway; CTP from UDP: step 2/2.</text>
</comment>
<comment type="subunit">
    <text evidence="1">Homotetramer.</text>
</comment>
<comment type="miscellaneous">
    <text evidence="1">CTPSs have evolved a hybrid strategy for distinguishing between UTP and CTP. The overlapping regions of the product feedback inhibitory and substrate sites recognize a common feature in both compounds, the triphosphate moiety. To differentiate isosteric substrate and product pyrimidine rings, an additional pocket far from the expected kinase/ligase catalytic site, specifically recognizes the cytosine and ribose portions of the product inhibitor.</text>
</comment>
<comment type="similarity">
    <text evidence="1">Belongs to the CTP synthase family.</text>
</comment>
<dbReference type="EC" id="6.3.4.2" evidence="1"/>
<dbReference type="EMBL" id="AL954747">
    <property type="protein sequence ID" value="CAD84956.1"/>
    <property type="molecule type" value="Genomic_DNA"/>
</dbReference>
<dbReference type="EMBL" id="AF061753">
    <property type="protein sequence ID" value="AAC33441.1"/>
    <property type="molecule type" value="Genomic_DNA"/>
</dbReference>
<dbReference type="RefSeq" id="WP_011111650.1">
    <property type="nucleotide sequence ID" value="NC_004757.1"/>
</dbReference>
<dbReference type="SMR" id="O85347"/>
<dbReference type="STRING" id="228410.NE1045"/>
<dbReference type="MEROPS" id="C26.964"/>
<dbReference type="GeneID" id="87104233"/>
<dbReference type="KEGG" id="neu:NE1045"/>
<dbReference type="eggNOG" id="COG0504">
    <property type="taxonomic scope" value="Bacteria"/>
</dbReference>
<dbReference type="HOGENOM" id="CLU_011675_5_0_4"/>
<dbReference type="OrthoDB" id="9801107at2"/>
<dbReference type="PhylomeDB" id="O85347"/>
<dbReference type="UniPathway" id="UPA00159">
    <property type="reaction ID" value="UER00277"/>
</dbReference>
<dbReference type="Proteomes" id="UP000001416">
    <property type="component" value="Chromosome"/>
</dbReference>
<dbReference type="GO" id="GO:0005829">
    <property type="term" value="C:cytosol"/>
    <property type="evidence" value="ECO:0007669"/>
    <property type="project" value="TreeGrafter"/>
</dbReference>
<dbReference type="GO" id="GO:0005524">
    <property type="term" value="F:ATP binding"/>
    <property type="evidence" value="ECO:0007669"/>
    <property type="project" value="UniProtKB-KW"/>
</dbReference>
<dbReference type="GO" id="GO:0003883">
    <property type="term" value="F:CTP synthase activity"/>
    <property type="evidence" value="ECO:0007669"/>
    <property type="project" value="UniProtKB-UniRule"/>
</dbReference>
<dbReference type="GO" id="GO:0004359">
    <property type="term" value="F:glutaminase activity"/>
    <property type="evidence" value="ECO:0007669"/>
    <property type="project" value="RHEA"/>
</dbReference>
<dbReference type="GO" id="GO:0042802">
    <property type="term" value="F:identical protein binding"/>
    <property type="evidence" value="ECO:0007669"/>
    <property type="project" value="TreeGrafter"/>
</dbReference>
<dbReference type="GO" id="GO:0046872">
    <property type="term" value="F:metal ion binding"/>
    <property type="evidence" value="ECO:0007669"/>
    <property type="project" value="UniProtKB-KW"/>
</dbReference>
<dbReference type="GO" id="GO:0044210">
    <property type="term" value="P:'de novo' CTP biosynthetic process"/>
    <property type="evidence" value="ECO:0007669"/>
    <property type="project" value="UniProtKB-UniRule"/>
</dbReference>
<dbReference type="GO" id="GO:0019856">
    <property type="term" value="P:pyrimidine nucleobase biosynthetic process"/>
    <property type="evidence" value="ECO:0007669"/>
    <property type="project" value="TreeGrafter"/>
</dbReference>
<dbReference type="CDD" id="cd03113">
    <property type="entry name" value="CTPS_N"/>
    <property type="match status" value="1"/>
</dbReference>
<dbReference type="CDD" id="cd01746">
    <property type="entry name" value="GATase1_CTP_Synthase"/>
    <property type="match status" value="1"/>
</dbReference>
<dbReference type="FunFam" id="3.40.50.300:FF:000009">
    <property type="entry name" value="CTP synthase"/>
    <property type="match status" value="1"/>
</dbReference>
<dbReference type="FunFam" id="3.40.50.880:FF:000002">
    <property type="entry name" value="CTP synthase"/>
    <property type="match status" value="1"/>
</dbReference>
<dbReference type="Gene3D" id="3.40.50.880">
    <property type="match status" value="1"/>
</dbReference>
<dbReference type="Gene3D" id="3.40.50.300">
    <property type="entry name" value="P-loop containing nucleotide triphosphate hydrolases"/>
    <property type="match status" value="1"/>
</dbReference>
<dbReference type="HAMAP" id="MF_01227">
    <property type="entry name" value="PyrG"/>
    <property type="match status" value="1"/>
</dbReference>
<dbReference type="InterPro" id="IPR029062">
    <property type="entry name" value="Class_I_gatase-like"/>
</dbReference>
<dbReference type="InterPro" id="IPR004468">
    <property type="entry name" value="CTP_synthase"/>
</dbReference>
<dbReference type="InterPro" id="IPR017456">
    <property type="entry name" value="CTP_synthase_N"/>
</dbReference>
<dbReference type="InterPro" id="IPR017926">
    <property type="entry name" value="GATASE"/>
</dbReference>
<dbReference type="InterPro" id="IPR033828">
    <property type="entry name" value="GATase1_CTP_Synthase"/>
</dbReference>
<dbReference type="InterPro" id="IPR027417">
    <property type="entry name" value="P-loop_NTPase"/>
</dbReference>
<dbReference type="NCBIfam" id="NF003792">
    <property type="entry name" value="PRK05380.1"/>
    <property type="match status" value="1"/>
</dbReference>
<dbReference type="NCBIfam" id="TIGR00337">
    <property type="entry name" value="PyrG"/>
    <property type="match status" value="1"/>
</dbReference>
<dbReference type="PANTHER" id="PTHR11550">
    <property type="entry name" value="CTP SYNTHASE"/>
    <property type="match status" value="1"/>
</dbReference>
<dbReference type="PANTHER" id="PTHR11550:SF0">
    <property type="entry name" value="CTP SYNTHASE-RELATED"/>
    <property type="match status" value="1"/>
</dbReference>
<dbReference type="Pfam" id="PF06418">
    <property type="entry name" value="CTP_synth_N"/>
    <property type="match status" value="1"/>
</dbReference>
<dbReference type="Pfam" id="PF00117">
    <property type="entry name" value="GATase"/>
    <property type="match status" value="1"/>
</dbReference>
<dbReference type="SUPFAM" id="SSF52317">
    <property type="entry name" value="Class I glutamine amidotransferase-like"/>
    <property type="match status" value="1"/>
</dbReference>
<dbReference type="SUPFAM" id="SSF52540">
    <property type="entry name" value="P-loop containing nucleoside triphosphate hydrolases"/>
    <property type="match status" value="1"/>
</dbReference>
<dbReference type="PROSITE" id="PS51273">
    <property type="entry name" value="GATASE_TYPE_1"/>
    <property type="match status" value="1"/>
</dbReference>
<evidence type="ECO:0000255" key="1">
    <source>
        <dbReference type="HAMAP-Rule" id="MF_01227"/>
    </source>
</evidence>
<evidence type="ECO:0000305" key="2"/>
<proteinExistence type="inferred from homology"/>
<accession>O85347</accession>
<keyword id="KW-0067">ATP-binding</keyword>
<keyword id="KW-0315">Glutamine amidotransferase</keyword>
<keyword id="KW-0436">Ligase</keyword>
<keyword id="KW-0460">Magnesium</keyword>
<keyword id="KW-0479">Metal-binding</keyword>
<keyword id="KW-0547">Nucleotide-binding</keyword>
<keyword id="KW-0665">Pyrimidine biosynthesis</keyword>
<keyword id="KW-1185">Reference proteome</keyword>